<evidence type="ECO:0000255" key="1">
    <source>
        <dbReference type="HAMAP-Rule" id="MF_00148"/>
    </source>
</evidence>
<feature type="chain" id="PRO_1000096565" description="Uracil-DNA glycosylase">
    <location>
        <begin position="1"/>
        <end position="225"/>
    </location>
</feature>
<feature type="active site" description="Proton acceptor" evidence="1">
    <location>
        <position position="65"/>
    </location>
</feature>
<name>UNG_BACMK</name>
<proteinExistence type="inferred from homology"/>
<accession>A9VSJ0</accession>
<comment type="function">
    <text evidence="1">Excises uracil residues from the DNA which can arise as a result of misincorporation of dUMP residues by DNA polymerase or due to deamination of cytosine.</text>
</comment>
<comment type="catalytic activity">
    <reaction evidence="1">
        <text>Hydrolyzes single-stranded DNA or mismatched double-stranded DNA and polynucleotides, releasing free uracil.</text>
        <dbReference type="EC" id="3.2.2.27"/>
    </reaction>
</comment>
<comment type="subcellular location">
    <subcellularLocation>
        <location evidence="1">Cytoplasm</location>
    </subcellularLocation>
</comment>
<comment type="similarity">
    <text evidence="1">Belongs to the uracil-DNA glycosylase (UDG) superfamily. UNG family.</text>
</comment>
<protein>
    <recommendedName>
        <fullName evidence="1">Uracil-DNA glycosylase</fullName>
        <shortName evidence="1">UDG</shortName>
        <ecNumber evidence="1">3.2.2.27</ecNumber>
    </recommendedName>
</protein>
<gene>
    <name evidence="1" type="primary">ung</name>
    <name type="ordered locus">BcerKBAB4_5191</name>
</gene>
<organism>
    <name type="scientific">Bacillus mycoides (strain KBAB4)</name>
    <name type="common">Bacillus weihenstephanensis</name>
    <dbReference type="NCBI Taxonomy" id="315730"/>
    <lineage>
        <taxon>Bacteria</taxon>
        <taxon>Bacillati</taxon>
        <taxon>Bacillota</taxon>
        <taxon>Bacilli</taxon>
        <taxon>Bacillales</taxon>
        <taxon>Bacillaceae</taxon>
        <taxon>Bacillus</taxon>
        <taxon>Bacillus cereus group</taxon>
    </lineage>
</organism>
<keyword id="KW-0963">Cytoplasm</keyword>
<keyword id="KW-0227">DNA damage</keyword>
<keyword id="KW-0234">DNA repair</keyword>
<keyword id="KW-0378">Hydrolase</keyword>
<sequence length="225" mass="26026">MENILQNDWGPLLGPEFEKEYYQNLANFLKEEYEEHVIYPKVEDIFNALQYTSYENTKVVILGQDPYHGPNQAHGLSFSVQPGIKTPPSLLNMYKELRDEYGYEIPNNGYLVKWAEQGVLLLNTVLTVRQGEANSHKGKGWEHFTDRVIELLNEREKPVIFILWGRHAQAKKKLITNTSHRIIESVHPSPLSARRGFFGSKPYSKVNTILANMGEREIDWEIPNL</sequence>
<dbReference type="EC" id="3.2.2.27" evidence="1"/>
<dbReference type="EMBL" id="CP000903">
    <property type="protein sequence ID" value="ABY46336.1"/>
    <property type="molecule type" value="Genomic_DNA"/>
</dbReference>
<dbReference type="RefSeq" id="WP_012262064.1">
    <property type="nucleotide sequence ID" value="NC_010184.1"/>
</dbReference>
<dbReference type="SMR" id="A9VSJ0"/>
<dbReference type="KEGG" id="bwe:BcerKBAB4_5191"/>
<dbReference type="eggNOG" id="COG0692">
    <property type="taxonomic scope" value="Bacteria"/>
</dbReference>
<dbReference type="HOGENOM" id="CLU_032162_3_0_9"/>
<dbReference type="Proteomes" id="UP000002154">
    <property type="component" value="Chromosome"/>
</dbReference>
<dbReference type="GO" id="GO:0005737">
    <property type="term" value="C:cytoplasm"/>
    <property type="evidence" value="ECO:0007669"/>
    <property type="project" value="UniProtKB-SubCell"/>
</dbReference>
<dbReference type="GO" id="GO:0004844">
    <property type="term" value="F:uracil DNA N-glycosylase activity"/>
    <property type="evidence" value="ECO:0007669"/>
    <property type="project" value="UniProtKB-UniRule"/>
</dbReference>
<dbReference type="GO" id="GO:0097510">
    <property type="term" value="P:base-excision repair, AP site formation via deaminated base removal"/>
    <property type="evidence" value="ECO:0007669"/>
    <property type="project" value="TreeGrafter"/>
</dbReference>
<dbReference type="CDD" id="cd10027">
    <property type="entry name" value="UDG-F1-like"/>
    <property type="match status" value="1"/>
</dbReference>
<dbReference type="FunFam" id="3.40.470.10:FF:000001">
    <property type="entry name" value="Uracil-DNA glycosylase"/>
    <property type="match status" value="1"/>
</dbReference>
<dbReference type="Gene3D" id="3.40.470.10">
    <property type="entry name" value="Uracil-DNA glycosylase-like domain"/>
    <property type="match status" value="1"/>
</dbReference>
<dbReference type="HAMAP" id="MF_00148">
    <property type="entry name" value="UDG"/>
    <property type="match status" value="1"/>
</dbReference>
<dbReference type="InterPro" id="IPR002043">
    <property type="entry name" value="UDG_fam1"/>
</dbReference>
<dbReference type="InterPro" id="IPR018085">
    <property type="entry name" value="Ura-DNA_Glyclase_AS"/>
</dbReference>
<dbReference type="InterPro" id="IPR005122">
    <property type="entry name" value="Uracil-DNA_glycosylase-like"/>
</dbReference>
<dbReference type="InterPro" id="IPR036895">
    <property type="entry name" value="Uracil-DNA_glycosylase-like_sf"/>
</dbReference>
<dbReference type="NCBIfam" id="NF003588">
    <property type="entry name" value="PRK05254.1-1"/>
    <property type="match status" value="1"/>
</dbReference>
<dbReference type="NCBIfam" id="NF003589">
    <property type="entry name" value="PRK05254.1-2"/>
    <property type="match status" value="1"/>
</dbReference>
<dbReference type="NCBIfam" id="NF003591">
    <property type="entry name" value="PRK05254.1-4"/>
    <property type="match status" value="1"/>
</dbReference>
<dbReference type="NCBIfam" id="NF003592">
    <property type="entry name" value="PRK05254.1-5"/>
    <property type="match status" value="1"/>
</dbReference>
<dbReference type="NCBIfam" id="TIGR00628">
    <property type="entry name" value="ung"/>
    <property type="match status" value="1"/>
</dbReference>
<dbReference type="PANTHER" id="PTHR11264">
    <property type="entry name" value="URACIL-DNA GLYCOSYLASE"/>
    <property type="match status" value="1"/>
</dbReference>
<dbReference type="PANTHER" id="PTHR11264:SF0">
    <property type="entry name" value="URACIL-DNA GLYCOSYLASE"/>
    <property type="match status" value="1"/>
</dbReference>
<dbReference type="Pfam" id="PF03167">
    <property type="entry name" value="UDG"/>
    <property type="match status" value="1"/>
</dbReference>
<dbReference type="SMART" id="SM00986">
    <property type="entry name" value="UDG"/>
    <property type="match status" value="1"/>
</dbReference>
<dbReference type="SMART" id="SM00987">
    <property type="entry name" value="UreE_C"/>
    <property type="match status" value="1"/>
</dbReference>
<dbReference type="SUPFAM" id="SSF52141">
    <property type="entry name" value="Uracil-DNA glycosylase-like"/>
    <property type="match status" value="1"/>
</dbReference>
<dbReference type="PROSITE" id="PS00130">
    <property type="entry name" value="U_DNA_GLYCOSYLASE"/>
    <property type="match status" value="1"/>
</dbReference>
<reference key="1">
    <citation type="journal article" date="2008" name="Chem. Biol. Interact.">
        <title>Extending the Bacillus cereus group genomics to putative food-borne pathogens of different toxicity.</title>
        <authorList>
            <person name="Lapidus A."/>
            <person name="Goltsman E."/>
            <person name="Auger S."/>
            <person name="Galleron N."/>
            <person name="Segurens B."/>
            <person name="Dossat C."/>
            <person name="Land M.L."/>
            <person name="Broussolle V."/>
            <person name="Brillard J."/>
            <person name="Guinebretiere M.-H."/>
            <person name="Sanchis V."/>
            <person name="Nguen-the C."/>
            <person name="Lereclus D."/>
            <person name="Richardson P."/>
            <person name="Wincker P."/>
            <person name="Weissenbach J."/>
            <person name="Ehrlich S.D."/>
            <person name="Sorokin A."/>
        </authorList>
    </citation>
    <scope>NUCLEOTIDE SEQUENCE [LARGE SCALE GENOMIC DNA]</scope>
    <source>
        <strain>KBAB4</strain>
    </source>
</reference>